<name>YP023_HUMAN</name>
<sequence length="132" mass="14168">MYSVLQLLKCLCSCWRKGPEGRRFQTEAAVCARPAWSPHPAGASEALGALPPPRQLVEKRRVSPPRRLDQSGRDGGAVAKCSLSRGLSPPGWTGRSLLRPWGSAAVLGSRAALACVLRPSRGVMPATIQSRR</sequence>
<reference key="1">
    <citation type="journal article" date="2004" name="Nat. Genet.">
        <title>Complete sequencing and characterization of 21,243 full-length human cDNAs.</title>
        <authorList>
            <person name="Ota T."/>
            <person name="Suzuki Y."/>
            <person name="Nishikawa T."/>
            <person name="Otsuki T."/>
            <person name="Sugiyama T."/>
            <person name="Irie R."/>
            <person name="Wakamatsu A."/>
            <person name="Hayashi K."/>
            <person name="Sato H."/>
            <person name="Nagai K."/>
            <person name="Kimura K."/>
            <person name="Makita H."/>
            <person name="Sekine M."/>
            <person name="Obayashi M."/>
            <person name="Nishi T."/>
            <person name="Shibahara T."/>
            <person name="Tanaka T."/>
            <person name="Ishii S."/>
            <person name="Yamamoto J."/>
            <person name="Saito K."/>
            <person name="Kawai Y."/>
            <person name="Isono Y."/>
            <person name="Nakamura Y."/>
            <person name="Nagahari K."/>
            <person name="Murakami K."/>
            <person name="Yasuda T."/>
            <person name="Iwayanagi T."/>
            <person name="Wagatsuma M."/>
            <person name="Shiratori A."/>
            <person name="Sudo H."/>
            <person name="Hosoiri T."/>
            <person name="Kaku Y."/>
            <person name="Kodaira H."/>
            <person name="Kondo H."/>
            <person name="Sugawara M."/>
            <person name="Takahashi M."/>
            <person name="Kanda K."/>
            <person name="Yokoi T."/>
            <person name="Furuya T."/>
            <person name="Kikkawa E."/>
            <person name="Omura Y."/>
            <person name="Abe K."/>
            <person name="Kamihara K."/>
            <person name="Katsuta N."/>
            <person name="Sato K."/>
            <person name="Tanikawa M."/>
            <person name="Yamazaki M."/>
            <person name="Ninomiya K."/>
            <person name="Ishibashi T."/>
            <person name="Yamashita H."/>
            <person name="Murakawa K."/>
            <person name="Fujimori K."/>
            <person name="Tanai H."/>
            <person name="Kimata M."/>
            <person name="Watanabe M."/>
            <person name="Hiraoka S."/>
            <person name="Chiba Y."/>
            <person name="Ishida S."/>
            <person name="Ono Y."/>
            <person name="Takiguchi S."/>
            <person name="Watanabe S."/>
            <person name="Yosida M."/>
            <person name="Hotuta T."/>
            <person name="Kusano J."/>
            <person name="Kanehori K."/>
            <person name="Takahashi-Fujii A."/>
            <person name="Hara H."/>
            <person name="Tanase T.-O."/>
            <person name="Nomura Y."/>
            <person name="Togiya S."/>
            <person name="Komai F."/>
            <person name="Hara R."/>
            <person name="Takeuchi K."/>
            <person name="Arita M."/>
            <person name="Imose N."/>
            <person name="Musashino K."/>
            <person name="Yuuki H."/>
            <person name="Oshima A."/>
            <person name="Sasaki N."/>
            <person name="Aotsuka S."/>
            <person name="Yoshikawa Y."/>
            <person name="Matsunawa H."/>
            <person name="Ichihara T."/>
            <person name="Shiohata N."/>
            <person name="Sano S."/>
            <person name="Moriya S."/>
            <person name="Momiyama H."/>
            <person name="Satoh N."/>
            <person name="Takami S."/>
            <person name="Terashima Y."/>
            <person name="Suzuki O."/>
            <person name="Nakagawa S."/>
            <person name="Senoh A."/>
            <person name="Mizoguchi H."/>
            <person name="Goto Y."/>
            <person name="Shimizu F."/>
            <person name="Wakebe H."/>
            <person name="Hishigaki H."/>
            <person name="Watanabe T."/>
            <person name="Sugiyama A."/>
            <person name="Takemoto M."/>
            <person name="Kawakami B."/>
            <person name="Yamazaki M."/>
            <person name="Watanabe K."/>
            <person name="Kumagai A."/>
            <person name="Itakura S."/>
            <person name="Fukuzumi Y."/>
            <person name="Fujimori Y."/>
            <person name="Komiyama M."/>
            <person name="Tashiro H."/>
            <person name="Tanigami A."/>
            <person name="Fujiwara T."/>
            <person name="Ono T."/>
            <person name="Yamada K."/>
            <person name="Fujii Y."/>
            <person name="Ozaki K."/>
            <person name="Hirao M."/>
            <person name="Ohmori Y."/>
            <person name="Kawabata A."/>
            <person name="Hikiji T."/>
            <person name="Kobatake N."/>
            <person name="Inagaki H."/>
            <person name="Ikema Y."/>
            <person name="Okamoto S."/>
            <person name="Okitani R."/>
            <person name="Kawakami T."/>
            <person name="Noguchi S."/>
            <person name="Itoh T."/>
            <person name="Shigeta K."/>
            <person name="Senba T."/>
            <person name="Matsumura K."/>
            <person name="Nakajima Y."/>
            <person name="Mizuno T."/>
            <person name="Morinaga M."/>
            <person name="Sasaki M."/>
            <person name="Togashi T."/>
            <person name="Oyama M."/>
            <person name="Hata H."/>
            <person name="Watanabe M."/>
            <person name="Komatsu T."/>
            <person name="Mizushima-Sugano J."/>
            <person name="Satoh T."/>
            <person name="Shirai Y."/>
            <person name="Takahashi Y."/>
            <person name="Nakagawa K."/>
            <person name="Okumura K."/>
            <person name="Nagase T."/>
            <person name="Nomura N."/>
            <person name="Kikuchi H."/>
            <person name="Masuho Y."/>
            <person name="Yamashita R."/>
            <person name="Nakai K."/>
            <person name="Yada T."/>
            <person name="Nakamura Y."/>
            <person name="Ohara O."/>
            <person name="Isogai T."/>
            <person name="Sugano S."/>
        </authorList>
    </citation>
    <scope>NUCLEOTIDE SEQUENCE [LARGE SCALE MRNA]</scope>
</reference>
<reference key="2">
    <citation type="journal article" date="2005" name="Nature">
        <title>The DNA sequence of the human X chromosome.</title>
        <authorList>
            <person name="Ross M.T."/>
            <person name="Grafham D.V."/>
            <person name="Coffey A.J."/>
            <person name="Scherer S."/>
            <person name="McLay K."/>
            <person name="Muzny D."/>
            <person name="Platzer M."/>
            <person name="Howell G.R."/>
            <person name="Burrows C."/>
            <person name="Bird C.P."/>
            <person name="Frankish A."/>
            <person name="Lovell F.L."/>
            <person name="Howe K.L."/>
            <person name="Ashurst J.L."/>
            <person name="Fulton R.S."/>
            <person name="Sudbrak R."/>
            <person name="Wen G."/>
            <person name="Jones M.C."/>
            <person name="Hurles M.E."/>
            <person name="Andrews T.D."/>
            <person name="Scott C.E."/>
            <person name="Searle S."/>
            <person name="Ramser J."/>
            <person name="Whittaker A."/>
            <person name="Deadman R."/>
            <person name="Carter N.P."/>
            <person name="Hunt S.E."/>
            <person name="Chen R."/>
            <person name="Cree A."/>
            <person name="Gunaratne P."/>
            <person name="Havlak P."/>
            <person name="Hodgson A."/>
            <person name="Metzker M.L."/>
            <person name="Richards S."/>
            <person name="Scott G."/>
            <person name="Steffen D."/>
            <person name="Sodergren E."/>
            <person name="Wheeler D.A."/>
            <person name="Worley K.C."/>
            <person name="Ainscough R."/>
            <person name="Ambrose K.D."/>
            <person name="Ansari-Lari M.A."/>
            <person name="Aradhya S."/>
            <person name="Ashwell R.I."/>
            <person name="Babbage A.K."/>
            <person name="Bagguley C.L."/>
            <person name="Ballabio A."/>
            <person name="Banerjee R."/>
            <person name="Barker G.E."/>
            <person name="Barlow K.F."/>
            <person name="Barrett I.P."/>
            <person name="Bates K.N."/>
            <person name="Beare D.M."/>
            <person name="Beasley H."/>
            <person name="Beasley O."/>
            <person name="Beck A."/>
            <person name="Bethel G."/>
            <person name="Blechschmidt K."/>
            <person name="Brady N."/>
            <person name="Bray-Allen S."/>
            <person name="Bridgeman A.M."/>
            <person name="Brown A.J."/>
            <person name="Brown M.J."/>
            <person name="Bonnin D."/>
            <person name="Bruford E.A."/>
            <person name="Buhay C."/>
            <person name="Burch P."/>
            <person name="Burford D."/>
            <person name="Burgess J."/>
            <person name="Burrill W."/>
            <person name="Burton J."/>
            <person name="Bye J.M."/>
            <person name="Carder C."/>
            <person name="Carrel L."/>
            <person name="Chako J."/>
            <person name="Chapman J.C."/>
            <person name="Chavez D."/>
            <person name="Chen E."/>
            <person name="Chen G."/>
            <person name="Chen Y."/>
            <person name="Chen Z."/>
            <person name="Chinault C."/>
            <person name="Ciccodicola A."/>
            <person name="Clark S.Y."/>
            <person name="Clarke G."/>
            <person name="Clee C.M."/>
            <person name="Clegg S."/>
            <person name="Clerc-Blankenburg K."/>
            <person name="Clifford K."/>
            <person name="Cobley V."/>
            <person name="Cole C.G."/>
            <person name="Conquer J.S."/>
            <person name="Corby N."/>
            <person name="Connor R.E."/>
            <person name="David R."/>
            <person name="Davies J."/>
            <person name="Davis C."/>
            <person name="Davis J."/>
            <person name="Delgado O."/>
            <person name="Deshazo D."/>
            <person name="Dhami P."/>
            <person name="Ding Y."/>
            <person name="Dinh H."/>
            <person name="Dodsworth S."/>
            <person name="Draper H."/>
            <person name="Dugan-Rocha S."/>
            <person name="Dunham A."/>
            <person name="Dunn M."/>
            <person name="Durbin K.J."/>
            <person name="Dutta I."/>
            <person name="Eades T."/>
            <person name="Ellwood M."/>
            <person name="Emery-Cohen A."/>
            <person name="Errington H."/>
            <person name="Evans K.L."/>
            <person name="Faulkner L."/>
            <person name="Francis F."/>
            <person name="Frankland J."/>
            <person name="Fraser A.E."/>
            <person name="Galgoczy P."/>
            <person name="Gilbert J."/>
            <person name="Gill R."/>
            <person name="Gloeckner G."/>
            <person name="Gregory S.G."/>
            <person name="Gribble S."/>
            <person name="Griffiths C."/>
            <person name="Grocock R."/>
            <person name="Gu Y."/>
            <person name="Gwilliam R."/>
            <person name="Hamilton C."/>
            <person name="Hart E.A."/>
            <person name="Hawes A."/>
            <person name="Heath P.D."/>
            <person name="Heitmann K."/>
            <person name="Hennig S."/>
            <person name="Hernandez J."/>
            <person name="Hinzmann B."/>
            <person name="Ho S."/>
            <person name="Hoffs M."/>
            <person name="Howden P.J."/>
            <person name="Huckle E.J."/>
            <person name="Hume J."/>
            <person name="Hunt P.J."/>
            <person name="Hunt A.R."/>
            <person name="Isherwood J."/>
            <person name="Jacob L."/>
            <person name="Johnson D."/>
            <person name="Jones S."/>
            <person name="de Jong P.J."/>
            <person name="Joseph S.S."/>
            <person name="Keenan S."/>
            <person name="Kelly S."/>
            <person name="Kershaw J.K."/>
            <person name="Khan Z."/>
            <person name="Kioschis P."/>
            <person name="Klages S."/>
            <person name="Knights A.J."/>
            <person name="Kosiura A."/>
            <person name="Kovar-Smith C."/>
            <person name="Laird G.K."/>
            <person name="Langford C."/>
            <person name="Lawlor S."/>
            <person name="Leversha M."/>
            <person name="Lewis L."/>
            <person name="Liu W."/>
            <person name="Lloyd C."/>
            <person name="Lloyd D.M."/>
            <person name="Loulseged H."/>
            <person name="Loveland J.E."/>
            <person name="Lovell J.D."/>
            <person name="Lozado R."/>
            <person name="Lu J."/>
            <person name="Lyne R."/>
            <person name="Ma J."/>
            <person name="Maheshwari M."/>
            <person name="Matthews L.H."/>
            <person name="McDowall J."/>
            <person name="McLaren S."/>
            <person name="McMurray A."/>
            <person name="Meidl P."/>
            <person name="Meitinger T."/>
            <person name="Milne S."/>
            <person name="Miner G."/>
            <person name="Mistry S.L."/>
            <person name="Morgan M."/>
            <person name="Morris S."/>
            <person name="Mueller I."/>
            <person name="Mullikin J.C."/>
            <person name="Nguyen N."/>
            <person name="Nordsiek G."/>
            <person name="Nyakatura G."/>
            <person name="O'dell C.N."/>
            <person name="Okwuonu G."/>
            <person name="Palmer S."/>
            <person name="Pandian R."/>
            <person name="Parker D."/>
            <person name="Parrish J."/>
            <person name="Pasternak S."/>
            <person name="Patel D."/>
            <person name="Pearce A.V."/>
            <person name="Pearson D.M."/>
            <person name="Pelan S.E."/>
            <person name="Perez L."/>
            <person name="Porter K.M."/>
            <person name="Ramsey Y."/>
            <person name="Reichwald K."/>
            <person name="Rhodes S."/>
            <person name="Ridler K.A."/>
            <person name="Schlessinger D."/>
            <person name="Schueler M.G."/>
            <person name="Sehra H.K."/>
            <person name="Shaw-Smith C."/>
            <person name="Shen H."/>
            <person name="Sheridan E.M."/>
            <person name="Shownkeen R."/>
            <person name="Skuce C.D."/>
            <person name="Smith M.L."/>
            <person name="Sotheran E.C."/>
            <person name="Steingruber H.E."/>
            <person name="Steward C.A."/>
            <person name="Storey R."/>
            <person name="Swann R.M."/>
            <person name="Swarbreck D."/>
            <person name="Tabor P.E."/>
            <person name="Taudien S."/>
            <person name="Taylor T."/>
            <person name="Teague B."/>
            <person name="Thomas K."/>
            <person name="Thorpe A."/>
            <person name="Timms K."/>
            <person name="Tracey A."/>
            <person name="Trevanion S."/>
            <person name="Tromans A.C."/>
            <person name="d'Urso M."/>
            <person name="Verduzco D."/>
            <person name="Villasana D."/>
            <person name="Waldron L."/>
            <person name="Wall M."/>
            <person name="Wang Q."/>
            <person name="Warren J."/>
            <person name="Warry G.L."/>
            <person name="Wei X."/>
            <person name="West A."/>
            <person name="Whitehead S.L."/>
            <person name="Whiteley M.N."/>
            <person name="Wilkinson J.E."/>
            <person name="Willey D.L."/>
            <person name="Williams G."/>
            <person name="Williams L."/>
            <person name="Williamson A."/>
            <person name="Williamson H."/>
            <person name="Wilming L."/>
            <person name="Woodmansey R.L."/>
            <person name="Wray P.W."/>
            <person name="Yen J."/>
            <person name="Zhang J."/>
            <person name="Zhou J."/>
            <person name="Zoghbi H."/>
            <person name="Zorilla S."/>
            <person name="Buck D."/>
            <person name="Reinhardt R."/>
            <person name="Poustka A."/>
            <person name="Rosenthal A."/>
            <person name="Lehrach H."/>
            <person name="Meindl A."/>
            <person name="Minx P.J."/>
            <person name="Hillier L.W."/>
            <person name="Willard H.F."/>
            <person name="Wilson R.K."/>
            <person name="Waterston R.H."/>
            <person name="Rice C.M."/>
            <person name="Vaudin M."/>
            <person name="Coulson A."/>
            <person name="Nelson D.L."/>
            <person name="Weinstock G."/>
            <person name="Sulston J.E."/>
            <person name="Durbin R.M."/>
            <person name="Hubbard T."/>
            <person name="Gibbs R.A."/>
            <person name="Beck S."/>
            <person name="Rogers J."/>
            <person name="Bentley D.R."/>
        </authorList>
    </citation>
    <scope>NUCLEOTIDE SEQUENCE [LARGE SCALE GENOMIC DNA]</scope>
</reference>
<keyword id="KW-1185">Reference proteome</keyword>
<organism>
    <name type="scientific">Homo sapiens</name>
    <name type="common">Human</name>
    <dbReference type="NCBI Taxonomy" id="9606"/>
    <lineage>
        <taxon>Eukaryota</taxon>
        <taxon>Metazoa</taxon>
        <taxon>Chordata</taxon>
        <taxon>Craniata</taxon>
        <taxon>Vertebrata</taxon>
        <taxon>Euteleostomi</taxon>
        <taxon>Mammalia</taxon>
        <taxon>Eutheria</taxon>
        <taxon>Euarchontoglires</taxon>
        <taxon>Primates</taxon>
        <taxon>Haplorrhini</taxon>
        <taxon>Catarrhini</taxon>
        <taxon>Hominidae</taxon>
        <taxon>Homo</taxon>
    </lineage>
</organism>
<dbReference type="EMBL" id="AK092264">
    <property type="status" value="NOT_ANNOTATED_CDS"/>
    <property type="molecule type" value="mRNA"/>
</dbReference>
<dbReference type="EMBL" id="Z97180">
    <property type="status" value="NOT_ANNOTATED_CDS"/>
    <property type="molecule type" value="Genomic_DNA"/>
</dbReference>
<dbReference type="IntAct" id="Q8NAQ8">
    <property type="interactions" value="1"/>
</dbReference>
<dbReference type="GlyGen" id="Q8NAQ8">
    <property type="glycosylation" value="1 site, 1 O-linked glycan (1 site)"/>
</dbReference>
<dbReference type="iPTMnet" id="Q8NAQ8"/>
<dbReference type="PhosphoSitePlus" id="Q8NAQ8"/>
<dbReference type="BioMuta" id="-"/>
<dbReference type="neXtProt" id="NX_Q8NAQ8"/>
<dbReference type="InParanoid" id="Q8NAQ8"/>
<dbReference type="PAN-GO" id="Q8NAQ8">
    <property type="GO annotations" value="0 GO annotations based on evolutionary models"/>
</dbReference>
<dbReference type="PhylomeDB" id="Q8NAQ8"/>
<dbReference type="PathwayCommons" id="Q8NAQ8"/>
<dbReference type="Pharos" id="Q8NAQ8">
    <property type="development level" value="Tdark"/>
</dbReference>
<dbReference type="Proteomes" id="UP000005640">
    <property type="component" value="Unplaced"/>
</dbReference>
<dbReference type="RNAct" id="Q8NAQ8">
    <property type="molecule type" value="protein"/>
</dbReference>
<protein>
    <recommendedName>
        <fullName>Putative uncharacterized protein FLJ34945</fullName>
    </recommendedName>
</protein>
<feature type="chain" id="PRO_0000329082" description="Putative uncharacterized protein FLJ34945">
    <location>
        <begin position="1"/>
        <end position="132"/>
    </location>
</feature>
<feature type="region of interest" description="Disordered" evidence="1">
    <location>
        <begin position="39"/>
        <end position="93"/>
    </location>
</feature>
<feature type="compositionally biased region" description="Basic and acidic residues" evidence="1">
    <location>
        <begin position="56"/>
        <end position="72"/>
    </location>
</feature>
<proteinExistence type="evidence at transcript level"/>
<accession>Q8NAQ8</accession>
<evidence type="ECO:0000256" key="1">
    <source>
        <dbReference type="SAM" id="MobiDB-lite"/>
    </source>
</evidence>